<proteinExistence type="evidence at protein level"/>
<name>PLK1_MOUSE</name>
<evidence type="ECO:0000250" key="1"/>
<evidence type="ECO:0000250" key="2">
    <source>
        <dbReference type="UniProtKB" id="P36873"/>
    </source>
</evidence>
<evidence type="ECO:0000250" key="3">
    <source>
        <dbReference type="UniProtKB" id="P53350"/>
    </source>
</evidence>
<evidence type="ECO:0000255" key="4">
    <source>
        <dbReference type="PROSITE-ProRule" id="PRU00154"/>
    </source>
</evidence>
<evidence type="ECO:0000255" key="5">
    <source>
        <dbReference type="PROSITE-ProRule" id="PRU00159"/>
    </source>
</evidence>
<evidence type="ECO:0000255" key="6">
    <source>
        <dbReference type="PROSITE-ProRule" id="PRU10027"/>
    </source>
</evidence>
<evidence type="ECO:0000269" key="7">
    <source>
    </source>
</evidence>
<evidence type="ECO:0000269" key="8">
    <source>
    </source>
</evidence>
<evidence type="ECO:0000269" key="9">
    <source>
    </source>
</evidence>
<evidence type="ECO:0000269" key="10">
    <source>
    </source>
</evidence>
<evidence type="ECO:0000269" key="11">
    <source>
    </source>
</evidence>
<evidence type="ECO:0000269" key="12">
    <source>
    </source>
</evidence>
<evidence type="ECO:0000269" key="13">
    <source>
    </source>
</evidence>
<evidence type="ECO:0000305" key="14"/>
<evidence type="ECO:0007744" key="15">
    <source>
        <dbReference type="PDB" id="5X3S"/>
    </source>
</evidence>
<evidence type="ECO:0007829" key="16">
    <source>
        <dbReference type="PDB" id="5DMS"/>
    </source>
</evidence>
<evidence type="ECO:0007829" key="17">
    <source>
        <dbReference type="PDB" id="5DNJ"/>
    </source>
</evidence>
<evidence type="ECO:0007829" key="18">
    <source>
        <dbReference type="PDB" id="5X3S"/>
    </source>
</evidence>
<keyword id="KW-0002">3D-structure</keyword>
<keyword id="KW-0067">ATP-binding</keyword>
<keyword id="KW-0131">Cell cycle</keyword>
<keyword id="KW-0132">Cell division</keyword>
<keyword id="KW-0137">Centromere</keyword>
<keyword id="KW-0158">Chromosome</keyword>
<keyword id="KW-0963">Cytoplasm</keyword>
<keyword id="KW-0206">Cytoskeleton</keyword>
<keyword id="KW-1017">Isopeptide bond</keyword>
<keyword id="KW-0418">Kinase</keyword>
<keyword id="KW-0995">Kinetochore</keyword>
<keyword id="KW-0498">Mitosis</keyword>
<keyword id="KW-0547">Nucleotide-binding</keyword>
<keyword id="KW-0539">Nucleus</keyword>
<keyword id="KW-0597">Phosphoprotein</keyword>
<keyword id="KW-1185">Reference proteome</keyword>
<keyword id="KW-0677">Repeat</keyword>
<keyword id="KW-0723">Serine/threonine-protein kinase</keyword>
<keyword id="KW-0808">Transferase</keyword>
<keyword id="KW-0832">Ubl conjugation</keyword>
<reference key="1">
    <citation type="journal article" date="1993" name="Proc. Natl. Acad. Sci. U.S.A.">
        <title>Identification and cloning of a protein kinase-encoding mouse gene, Plk, related to the polo gene of Drosophila.</title>
        <authorList>
            <person name="Clay F.J."/>
            <person name="McEwen S.J."/>
            <person name="Bertoncello I."/>
            <person name="Wilks A.F."/>
            <person name="Dunn A.R."/>
        </authorList>
    </citation>
    <scope>NUCLEOTIDE SEQUENCE [MRNA]</scope>
    <source>
        <strain>C57BL/6J</strain>
        <tissue>Bone marrow</tissue>
    </source>
</reference>
<reference key="2">
    <citation type="journal article" date="1994" name="Cell Growth Differ.">
        <title>Cloning and characterization of human and murine homologues of the Drosophila polo serine-threonine kinase.</title>
        <authorList>
            <person name="Hamanaka R."/>
            <person name="Maloid S."/>
            <person name="Smith M.R."/>
            <person name="O'Connell C.D."/>
            <person name="Longo D.L."/>
            <person name="Ferris D.K."/>
        </authorList>
    </citation>
    <scope>NUCLEOTIDE SEQUENCE [MRNA]</scope>
    <source>
        <strain>C57BL/6 X CBA</strain>
        <tissue>Thymus</tissue>
    </source>
</reference>
<reference key="3">
    <citation type="journal article" date="1993" name="Mol. Cell. Biol.">
        <title>Cell cycle- and terminal differentiation-associated regulation of the mouse mRNA encoding a conserved mitotic protein kinase.</title>
        <authorList>
            <person name="Lake R.J."/>
            <person name="Jelinek W.R."/>
        </authorList>
    </citation>
    <scope>NUCLEOTIDE SEQUENCE [MRNA]</scope>
    <source>
        <tissue>Testis</tissue>
    </source>
</reference>
<reference key="4">
    <citation type="journal article" date="2004" name="Genome Res.">
        <title>The status, quality, and expansion of the NIH full-length cDNA project: the Mammalian Gene Collection (MGC).</title>
        <authorList>
            <consortium name="The MGC Project Team"/>
        </authorList>
    </citation>
    <scope>NUCLEOTIDE SEQUENCE [LARGE SCALE MRNA]</scope>
    <source>
        <strain>FVB/N</strain>
        <tissue>Mammary gland</tissue>
    </source>
</reference>
<reference key="5">
    <citation type="journal article" date="1997" name="Mol. Cell. Biol.">
        <title>Plk is a functional homolog of Saccharomyces cerevisiae Cdc5, and elevated Plk activity induces multiple septation structures.</title>
        <authorList>
            <person name="Lee K.S."/>
            <person name="Erikson R.L."/>
        </authorList>
    </citation>
    <scope>MUTAGENESIS OF LYS-82; ASP-194; GLU-206 AND THR-210</scope>
</reference>
<reference key="6">
    <citation type="journal article" date="2008" name="Mol. Cell. Biol.">
        <title>Polo-like kinase 1 is essential for early embryonic development and tumor suppression.</title>
        <authorList>
            <person name="Lu L.Y."/>
            <person name="Wood J.L."/>
            <person name="Minter-Dykhouse K."/>
            <person name="Ye L."/>
            <person name="Saunders T.L."/>
            <person name="Yu X."/>
            <person name="Chen J."/>
        </authorList>
    </citation>
    <scope>DISRUPTION PHENOTYPE</scope>
</reference>
<reference key="7">
    <citation type="journal article" date="2010" name="Cell">
        <title>A tissue-specific atlas of mouse protein phosphorylation and expression.</title>
        <authorList>
            <person name="Huttlin E.L."/>
            <person name="Jedrychowski M.P."/>
            <person name="Elias J.E."/>
            <person name="Goswami T."/>
            <person name="Rad R."/>
            <person name="Beausoleil S.A."/>
            <person name="Villen J."/>
            <person name="Haas W."/>
            <person name="Sowa M.E."/>
            <person name="Gygi S.P."/>
        </authorList>
    </citation>
    <scope>IDENTIFICATION BY MASS SPECTROMETRY [LARGE SCALE ANALYSIS]</scope>
    <source>
        <tissue>Spleen</tissue>
    </source>
</reference>
<reference key="8">
    <citation type="journal article" date="2012" name="J. Biol. Chem.">
        <title>Furry protein promotes Aurora A-mediated polo-like kinase 1 activation.</title>
        <authorList>
            <person name="Ikeda M."/>
            <person name="Chiba S."/>
            <person name="Ohashi K."/>
            <person name="Mizuno K."/>
        </authorList>
    </citation>
    <scope>INTERACTION WITH FRY</scope>
</reference>
<reference key="9">
    <citation type="journal article" date="2012" name="Mol. Cell">
        <title>Tex14, a plk1-regulated protein, is required for kinetochore-microtubule attachment and regulation of the spindle assembly checkpoint.</title>
        <authorList>
            <person name="Mondal G."/>
            <person name="Ohashi A."/>
            <person name="Yang L."/>
            <person name="Rowley M."/>
            <person name="Couch F.J."/>
        </authorList>
    </citation>
    <scope>FUNCTION IN PHOSPHORYLATION OF TEX14</scope>
</reference>
<reference key="10">
    <citation type="journal article" date="2017" name="J. Biol. Chem.">
        <title>DAZ-interacting Protein 1 (Dzip1) Phosphorylation by Polo-like Kinase 1 (Plk1) Regulates the Centriolar Satellite Localization of the BBSome Protein during the Cell Cycle.</title>
        <authorList>
            <person name="Zhang B."/>
            <person name="Wang G."/>
            <person name="Xu X."/>
            <person name="Yang S."/>
            <person name="Zhuang T."/>
            <person name="Wang G."/>
            <person name="Ren H."/>
            <person name="Cheng S.Y."/>
            <person name="Jiang Q."/>
            <person name="Zhang C."/>
        </authorList>
    </citation>
    <scope>FUNCTION</scope>
</reference>
<reference key="11">
    <citation type="journal article" date="2015" name="Nature">
        <title>Meikin is a conserved regulator of meiosis-I-specific kinetochore function.</title>
        <authorList>
            <person name="Kim J."/>
            <person name="Ishiguro K."/>
            <person name="Nambu A."/>
            <person name="Akiyoshi B."/>
            <person name="Yokobayashi S."/>
            <person name="Kagami A."/>
            <person name="Ishiguro T."/>
            <person name="Pendas A.M."/>
            <person name="Takeda N."/>
            <person name="Sakakibara Y."/>
            <person name="Kitajima T.S."/>
            <person name="Tanno Y."/>
            <person name="Sakuno T."/>
            <person name="Watanabe Y."/>
        </authorList>
    </citation>
    <scope>FUNCTION</scope>
    <scope>SUBCELLULAR LOCATION</scope>
</reference>
<reference evidence="15" key="12">
    <citation type="journal article" date="2018" name="J. Biol. Chem.">
        <title>Phosphorylation of human enhancer filamentation 1 (HEF1) stimulates interaction with Polo-like kinase 1 leading to HEF1 localization to focal adhesions.</title>
        <authorList>
            <person name="Lee K.H."/>
            <person name="Hwang J.A."/>
            <person name="Kim S.O."/>
            <person name="Kim J.H."/>
            <person name="Shin S.C."/>
            <person name="Kim E.E."/>
            <person name="Lee K.S."/>
            <person name="Rhee K."/>
            <person name="Jeon B.H."/>
            <person name="Bang J.K."/>
            <person name="Cha-Molstad H."/>
            <person name="Soung N.K."/>
            <person name="Jang J.H."/>
            <person name="Ko S.K."/>
            <person name="Lee H.G."/>
            <person name="Ahn J.S."/>
            <person name="Kwon Y.T."/>
            <person name="Kim B.Y."/>
        </authorList>
    </citation>
    <scope>X-RAY CRYSTALLOGRAPHY (2.90 ANGSTROMS) OF 371-594 IN COMPLEX WITH NEDD9 PHOSPHOPEPTIDE</scope>
    <scope>INTERACTION WITH NEDD9</scope>
    <scope>MUTAGENESIS OF HIS-538 AND LYS-540</scope>
</reference>
<dbReference type="EC" id="2.7.11.21" evidence="8"/>
<dbReference type="EMBL" id="L06144">
    <property type="protein sequence ID" value="AAA39948.1"/>
    <property type="molecule type" value="mRNA"/>
</dbReference>
<dbReference type="EMBL" id="U01063">
    <property type="protein sequence ID" value="AAA56635.1"/>
    <property type="molecule type" value="mRNA"/>
</dbReference>
<dbReference type="EMBL" id="L19558">
    <property type="protein sequence ID" value="AAA16071.1"/>
    <property type="molecule type" value="mRNA"/>
</dbReference>
<dbReference type="EMBL" id="BC006880">
    <property type="protein sequence ID" value="AAH06880.1"/>
    <property type="molecule type" value="mRNA"/>
</dbReference>
<dbReference type="CCDS" id="CCDS21812.1"/>
<dbReference type="PIR" id="A47545">
    <property type="entry name" value="A47545"/>
</dbReference>
<dbReference type="PIR" id="A54596">
    <property type="entry name" value="A54596"/>
</dbReference>
<dbReference type="RefSeq" id="NP_035251.3">
    <property type="nucleotide sequence ID" value="NM_011121.4"/>
</dbReference>
<dbReference type="PDB" id="5DMS">
    <property type="method" value="X-ray"/>
    <property type="resolution" value="1.90 A"/>
    <property type="chains" value="A/C=367-603"/>
</dbReference>
<dbReference type="PDB" id="5DMV">
    <property type="method" value="X-ray"/>
    <property type="resolution" value="2.50 A"/>
    <property type="chains" value="C=367-603"/>
</dbReference>
<dbReference type="PDB" id="5DNJ">
    <property type="method" value="X-ray"/>
    <property type="resolution" value="2.30 A"/>
    <property type="chains" value="A=367-603"/>
</dbReference>
<dbReference type="PDB" id="5X3S">
    <property type="method" value="X-ray"/>
    <property type="resolution" value="2.90 A"/>
    <property type="chains" value="A/B=371-594"/>
</dbReference>
<dbReference type="PDBsum" id="5DMS"/>
<dbReference type="PDBsum" id="5DMV"/>
<dbReference type="PDBsum" id="5DNJ"/>
<dbReference type="PDBsum" id="5X3S"/>
<dbReference type="SMR" id="Q07832"/>
<dbReference type="BioGRID" id="202250">
    <property type="interactions" value="34"/>
</dbReference>
<dbReference type="DIP" id="DIP-56722N"/>
<dbReference type="FunCoup" id="Q07832">
    <property type="interactions" value="995"/>
</dbReference>
<dbReference type="IntAct" id="Q07832">
    <property type="interactions" value="31"/>
</dbReference>
<dbReference type="MINT" id="Q07832"/>
<dbReference type="STRING" id="10090.ENSMUSP00000033154"/>
<dbReference type="iPTMnet" id="Q07832"/>
<dbReference type="PhosphoSitePlus" id="Q07832"/>
<dbReference type="jPOST" id="Q07832"/>
<dbReference type="PaxDb" id="10090-ENSMUSP00000033154"/>
<dbReference type="PeptideAtlas" id="Q07832"/>
<dbReference type="ProteomicsDB" id="289764"/>
<dbReference type="Pumba" id="Q07832"/>
<dbReference type="Antibodypedia" id="12634">
    <property type="antibodies" value="1233 antibodies from 47 providers"/>
</dbReference>
<dbReference type="DNASU" id="18817"/>
<dbReference type="Ensembl" id="ENSMUST00000033154.8">
    <property type="protein sequence ID" value="ENSMUSP00000033154.7"/>
    <property type="gene ID" value="ENSMUSG00000030867.8"/>
</dbReference>
<dbReference type="GeneID" id="18817"/>
<dbReference type="KEGG" id="mmu:18817"/>
<dbReference type="UCSC" id="uc009joo.2">
    <property type="organism name" value="mouse"/>
</dbReference>
<dbReference type="AGR" id="MGI:97621"/>
<dbReference type="CTD" id="5347"/>
<dbReference type="MGI" id="MGI:97621">
    <property type="gene designation" value="Plk1"/>
</dbReference>
<dbReference type="VEuPathDB" id="HostDB:ENSMUSG00000030867"/>
<dbReference type="eggNOG" id="KOG0575">
    <property type="taxonomic scope" value="Eukaryota"/>
</dbReference>
<dbReference type="GeneTree" id="ENSGT00940000157752"/>
<dbReference type="HOGENOM" id="CLU_000288_46_1_1"/>
<dbReference type="InParanoid" id="Q07832"/>
<dbReference type="OMA" id="IQIHKSM"/>
<dbReference type="OrthoDB" id="408964at2759"/>
<dbReference type="PhylomeDB" id="Q07832"/>
<dbReference type="TreeFam" id="TF101089"/>
<dbReference type="BRENDA" id="2.7.11.21">
    <property type="organism ID" value="3474"/>
</dbReference>
<dbReference type="Reactome" id="R-MMU-141444">
    <property type="pathway name" value="Amplification of signal from unattached kinetochores via a MAD2 inhibitory signal"/>
</dbReference>
<dbReference type="Reactome" id="R-MMU-156711">
    <property type="pathway name" value="Polo-like kinase mediated events"/>
</dbReference>
<dbReference type="Reactome" id="R-MMU-162658">
    <property type="pathway name" value="Golgi Cisternae Pericentriolar Stack Reorganization"/>
</dbReference>
<dbReference type="Reactome" id="R-MMU-174178">
    <property type="pathway name" value="APC/C:Cdh1 mediated degradation of Cdc20 and other APC/C:Cdh1 targeted proteins in late mitosis/early G1"/>
</dbReference>
<dbReference type="Reactome" id="R-MMU-176412">
    <property type="pathway name" value="Phosphorylation of the APC/C"/>
</dbReference>
<dbReference type="Reactome" id="R-MMU-176417">
    <property type="pathway name" value="Phosphorylation of Emi1"/>
</dbReference>
<dbReference type="Reactome" id="R-MMU-2299718">
    <property type="pathway name" value="Condensation of Prophase Chromosomes"/>
</dbReference>
<dbReference type="Reactome" id="R-MMU-2467813">
    <property type="pathway name" value="Separation of Sister Chromatids"/>
</dbReference>
<dbReference type="Reactome" id="R-MMU-2500257">
    <property type="pathway name" value="Resolution of Sister Chromatid Cohesion"/>
</dbReference>
<dbReference type="Reactome" id="R-MMU-2565942">
    <property type="pathway name" value="Regulation of PLK1 Activity at G2/M Transition"/>
</dbReference>
<dbReference type="Reactome" id="R-MMU-2980767">
    <property type="pathway name" value="Activation of NIMA Kinases NEK9, NEK6, NEK7"/>
</dbReference>
<dbReference type="Reactome" id="R-MMU-380259">
    <property type="pathway name" value="Loss of Nlp from mitotic centrosomes"/>
</dbReference>
<dbReference type="Reactome" id="R-MMU-380270">
    <property type="pathway name" value="Recruitment of mitotic centrosome proteins and complexes"/>
</dbReference>
<dbReference type="Reactome" id="R-MMU-380284">
    <property type="pathway name" value="Loss of proteins required for interphase microtubule organization from the centrosome"/>
</dbReference>
<dbReference type="Reactome" id="R-MMU-380320">
    <property type="pathway name" value="Recruitment of NuMA to mitotic centrosomes"/>
</dbReference>
<dbReference type="Reactome" id="R-MMU-5620912">
    <property type="pathway name" value="Anchoring of the basal body to the plasma membrane"/>
</dbReference>
<dbReference type="Reactome" id="R-MMU-5663220">
    <property type="pathway name" value="RHO GTPases Activate Formins"/>
</dbReference>
<dbReference type="Reactome" id="R-MMU-68877">
    <property type="pathway name" value="Mitotic Prometaphase"/>
</dbReference>
<dbReference type="Reactome" id="R-MMU-68881">
    <property type="pathway name" value="Mitotic Metaphase/Anaphase Transition"/>
</dbReference>
<dbReference type="Reactome" id="R-MMU-68884">
    <property type="pathway name" value="Mitotic Telophase/Cytokinesis"/>
</dbReference>
<dbReference type="Reactome" id="R-MMU-69273">
    <property type="pathway name" value="Cyclin A/B1/B2 associated events during G2/M transition"/>
</dbReference>
<dbReference type="Reactome" id="R-MMU-8852276">
    <property type="pathway name" value="The role of GTSE1 in G2/M progression after G2 checkpoint"/>
</dbReference>
<dbReference type="Reactome" id="R-MMU-8854518">
    <property type="pathway name" value="AURKA Activation by TPX2"/>
</dbReference>
<dbReference type="Reactome" id="R-MMU-9648025">
    <property type="pathway name" value="EML4 and NUDC in mitotic spindle formation"/>
</dbReference>
<dbReference type="BioGRID-ORCS" id="18817">
    <property type="hits" value="30 hits in 79 CRISPR screens"/>
</dbReference>
<dbReference type="ChiTaRS" id="Plk1">
    <property type="organism name" value="mouse"/>
</dbReference>
<dbReference type="EvolutionaryTrace" id="Q07832"/>
<dbReference type="PRO" id="PR:Q07832"/>
<dbReference type="Proteomes" id="UP000000589">
    <property type="component" value="Chromosome 7"/>
</dbReference>
<dbReference type="RNAct" id="Q07832">
    <property type="molecule type" value="protein"/>
</dbReference>
<dbReference type="Bgee" id="ENSMUSG00000030867">
    <property type="expression patterns" value="Expressed in embryonic post-anal tail and 178 other cell types or tissues"/>
</dbReference>
<dbReference type="ExpressionAtlas" id="Q07832">
    <property type="expression patterns" value="baseline and differential"/>
</dbReference>
<dbReference type="GO" id="GO:0034451">
    <property type="term" value="C:centriolar satellite"/>
    <property type="evidence" value="ECO:0000314"/>
    <property type="project" value="MGI"/>
</dbReference>
<dbReference type="GO" id="GO:0005814">
    <property type="term" value="C:centriole"/>
    <property type="evidence" value="ECO:0000314"/>
    <property type="project" value="MGI"/>
</dbReference>
<dbReference type="GO" id="GO:0005813">
    <property type="term" value="C:centrosome"/>
    <property type="evidence" value="ECO:0000250"/>
    <property type="project" value="UniProtKB"/>
</dbReference>
<dbReference type="GO" id="GO:0000785">
    <property type="term" value="C:chromatin"/>
    <property type="evidence" value="ECO:0000314"/>
    <property type="project" value="MGI"/>
</dbReference>
<dbReference type="GO" id="GO:0000775">
    <property type="term" value="C:chromosome, centromeric region"/>
    <property type="evidence" value="ECO:0000314"/>
    <property type="project" value="MGI"/>
</dbReference>
<dbReference type="GO" id="GO:0000779">
    <property type="term" value="C:condensed chromosome, centromeric region"/>
    <property type="evidence" value="ECO:0000314"/>
    <property type="project" value="MGI"/>
</dbReference>
<dbReference type="GO" id="GO:0005737">
    <property type="term" value="C:cytoplasm"/>
    <property type="evidence" value="ECO:0007669"/>
    <property type="project" value="UniProtKB-KW"/>
</dbReference>
<dbReference type="GO" id="GO:0000776">
    <property type="term" value="C:kinetochore"/>
    <property type="evidence" value="ECO:0000314"/>
    <property type="project" value="MGI"/>
</dbReference>
<dbReference type="GO" id="GO:0030496">
    <property type="term" value="C:midbody"/>
    <property type="evidence" value="ECO:0000250"/>
    <property type="project" value="UniProtKB"/>
</dbReference>
<dbReference type="GO" id="GO:0097431">
    <property type="term" value="C:mitotic spindle pole"/>
    <property type="evidence" value="ECO:0000314"/>
    <property type="project" value="MGI"/>
</dbReference>
<dbReference type="GO" id="GO:0005634">
    <property type="term" value="C:nucleus"/>
    <property type="evidence" value="ECO:0000250"/>
    <property type="project" value="UniProtKB"/>
</dbReference>
<dbReference type="GO" id="GO:0000940">
    <property type="term" value="C:outer kinetochore"/>
    <property type="evidence" value="ECO:0007669"/>
    <property type="project" value="Ensembl"/>
</dbReference>
<dbReference type="GO" id="GO:0005819">
    <property type="term" value="C:spindle"/>
    <property type="evidence" value="ECO:0000250"/>
    <property type="project" value="UniProtKB"/>
</dbReference>
<dbReference type="GO" id="GO:0005876">
    <property type="term" value="C:spindle microtubule"/>
    <property type="evidence" value="ECO:0007669"/>
    <property type="project" value="Ensembl"/>
</dbReference>
<dbReference type="GO" id="GO:0051233">
    <property type="term" value="C:spindle midzone"/>
    <property type="evidence" value="ECO:0000250"/>
    <property type="project" value="UniProtKB"/>
</dbReference>
<dbReference type="GO" id="GO:0000922">
    <property type="term" value="C:spindle pole"/>
    <property type="evidence" value="ECO:0000266"/>
    <property type="project" value="MGI"/>
</dbReference>
<dbReference type="GO" id="GO:0000795">
    <property type="term" value="C:synaptonemal complex"/>
    <property type="evidence" value="ECO:0000314"/>
    <property type="project" value="MGI"/>
</dbReference>
<dbReference type="GO" id="GO:0010997">
    <property type="term" value="F:anaphase-promoting complex binding"/>
    <property type="evidence" value="ECO:0007669"/>
    <property type="project" value="Ensembl"/>
</dbReference>
<dbReference type="GO" id="GO:0005524">
    <property type="term" value="F:ATP binding"/>
    <property type="evidence" value="ECO:0007669"/>
    <property type="project" value="UniProtKB-KW"/>
</dbReference>
<dbReference type="GO" id="GO:0042802">
    <property type="term" value="F:identical protein binding"/>
    <property type="evidence" value="ECO:0007669"/>
    <property type="project" value="Ensembl"/>
</dbReference>
<dbReference type="GO" id="GO:0000287">
    <property type="term" value="F:magnesium ion binding"/>
    <property type="evidence" value="ECO:0007669"/>
    <property type="project" value="Ensembl"/>
</dbReference>
<dbReference type="GO" id="GO:0008017">
    <property type="term" value="F:microtubule binding"/>
    <property type="evidence" value="ECO:0000250"/>
    <property type="project" value="UniProtKB"/>
</dbReference>
<dbReference type="GO" id="GO:0004672">
    <property type="term" value="F:protein kinase activity"/>
    <property type="evidence" value="ECO:0000314"/>
    <property type="project" value="CACAO"/>
</dbReference>
<dbReference type="GO" id="GO:0019901">
    <property type="term" value="F:protein kinase binding"/>
    <property type="evidence" value="ECO:0007669"/>
    <property type="project" value="Ensembl"/>
</dbReference>
<dbReference type="GO" id="GO:0106310">
    <property type="term" value="F:protein serine kinase activity"/>
    <property type="evidence" value="ECO:0007669"/>
    <property type="project" value="Ensembl"/>
</dbReference>
<dbReference type="GO" id="GO:0004674">
    <property type="term" value="F:protein serine/threonine kinase activity"/>
    <property type="evidence" value="ECO:0000314"/>
    <property type="project" value="UniProtKB"/>
</dbReference>
<dbReference type="GO" id="GO:0007098">
    <property type="term" value="P:centrosome cycle"/>
    <property type="evidence" value="ECO:0000250"/>
    <property type="project" value="UniProtKB"/>
</dbReference>
<dbReference type="GO" id="GO:0097681">
    <property type="term" value="P:double-strand break repair via alternative nonhomologous end joining"/>
    <property type="evidence" value="ECO:0007669"/>
    <property type="project" value="Ensembl"/>
</dbReference>
<dbReference type="GO" id="GO:0000132">
    <property type="term" value="P:establishment of mitotic spindle orientation"/>
    <property type="evidence" value="ECO:0007669"/>
    <property type="project" value="Ensembl"/>
</dbReference>
<dbReference type="GO" id="GO:0045184">
    <property type="term" value="P:establishment of protein localization"/>
    <property type="evidence" value="ECO:0000266"/>
    <property type="project" value="MGI"/>
</dbReference>
<dbReference type="GO" id="GO:0016321">
    <property type="term" value="P:female meiosis chromosome segregation"/>
    <property type="evidence" value="ECO:0000315"/>
    <property type="project" value="MGI"/>
</dbReference>
<dbReference type="GO" id="GO:0000086">
    <property type="term" value="P:G2/M transition of mitotic cell cycle"/>
    <property type="evidence" value="ECO:0000250"/>
    <property type="project" value="UniProtKB"/>
</dbReference>
<dbReference type="GO" id="GO:0045143">
    <property type="term" value="P:homologous chromosome segregation"/>
    <property type="evidence" value="ECO:0000315"/>
    <property type="project" value="MGI"/>
</dbReference>
<dbReference type="GO" id="GO:0001578">
    <property type="term" value="P:microtubule bundle formation"/>
    <property type="evidence" value="ECO:0000250"/>
    <property type="project" value="UniProtKB"/>
</dbReference>
<dbReference type="GO" id="GO:0000278">
    <property type="term" value="P:mitotic cell cycle"/>
    <property type="evidence" value="ECO:0000250"/>
    <property type="project" value="UniProtKB"/>
</dbReference>
<dbReference type="GO" id="GO:0000281">
    <property type="term" value="P:mitotic cytokinesis"/>
    <property type="evidence" value="ECO:0000250"/>
    <property type="project" value="UniProtKB"/>
</dbReference>
<dbReference type="GO" id="GO:0007095">
    <property type="term" value="P:mitotic G2 DNA damage checkpoint signaling"/>
    <property type="evidence" value="ECO:0000250"/>
    <property type="project" value="UniProtKB"/>
</dbReference>
<dbReference type="GO" id="GO:0000070">
    <property type="term" value="P:mitotic sister chromatid segregation"/>
    <property type="evidence" value="ECO:0000250"/>
    <property type="project" value="UniProtKB"/>
</dbReference>
<dbReference type="GO" id="GO:0007094">
    <property type="term" value="P:mitotic spindle assembly checkpoint signaling"/>
    <property type="evidence" value="ECO:0000250"/>
    <property type="project" value="UniProtKB"/>
</dbReference>
<dbReference type="GO" id="GO:0043066">
    <property type="term" value="P:negative regulation of apoptotic process"/>
    <property type="evidence" value="ECO:0000250"/>
    <property type="project" value="UniProtKB"/>
</dbReference>
<dbReference type="GO" id="GO:2000042">
    <property type="term" value="P:negative regulation of double-strand break repair via homologous recombination"/>
    <property type="evidence" value="ECO:0000250"/>
    <property type="project" value="UniProtKB"/>
</dbReference>
<dbReference type="GO" id="GO:0000122">
    <property type="term" value="P:negative regulation of transcription by RNA polymerase II"/>
    <property type="evidence" value="ECO:0000250"/>
    <property type="project" value="UniProtKB"/>
</dbReference>
<dbReference type="GO" id="GO:0051081">
    <property type="term" value="P:nuclear membrane disassembly"/>
    <property type="evidence" value="ECO:0000250"/>
    <property type="project" value="UniProtKB"/>
</dbReference>
<dbReference type="GO" id="GO:0032436">
    <property type="term" value="P:positive regulation of proteasomal ubiquitin-dependent protein catabolic process"/>
    <property type="evidence" value="ECO:0000250"/>
    <property type="project" value="UniProtKB"/>
</dbReference>
<dbReference type="GO" id="GO:1904668">
    <property type="term" value="P:positive regulation of ubiquitin protein ligase activity"/>
    <property type="evidence" value="ECO:0000250"/>
    <property type="project" value="UniProtKB"/>
</dbReference>
<dbReference type="GO" id="GO:0051443">
    <property type="term" value="P:positive regulation of ubiquitin-protein transferase activity"/>
    <property type="evidence" value="ECO:0000250"/>
    <property type="project" value="UniProtKB"/>
</dbReference>
<dbReference type="GO" id="GO:0031648">
    <property type="term" value="P:protein destabilization"/>
    <property type="evidence" value="ECO:0007669"/>
    <property type="project" value="Ensembl"/>
</dbReference>
<dbReference type="GO" id="GO:0071168">
    <property type="term" value="P:protein localization to chromatin"/>
    <property type="evidence" value="ECO:0000250"/>
    <property type="project" value="UniProtKB"/>
</dbReference>
<dbReference type="GO" id="GO:0090435">
    <property type="term" value="P:protein localization to nuclear envelope"/>
    <property type="evidence" value="ECO:0000250"/>
    <property type="project" value="UniProtKB"/>
</dbReference>
<dbReference type="GO" id="GO:0033365">
    <property type="term" value="P:protein localization to organelle"/>
    <property type="evidence" value="ECO:0000314"/>
    <property type="project" value="MGI"/>
</dbReference>
<dbReference type="GO" id="GO:0006468">
    <property type="term" value="P:protein phosphorylation"/>
    <property type="evidence" value="ECO:0000315"/>
    <property type="project" value="CACAO"/>
</dbReference>
<dbReference type="GO" id="GO:0016567">
    <property type="term" value="P:protein ubiquitination"/>
    <property type="evidence" value="ECO:0007669"/>
    <property type="project" value="Ensembl"/>
</dbReference>
<dbReference type="GO" id="GO:0032465">
    <property type="term" value="P:regulation of cytokinesis"/>
    <property type="evidence" value="ECO:0007669"/>
    <property type="project" value="Ensembl"/>
</dbReference>
<dbReference type="GO" id="GO:1901673">
    <property type="term" value="P:regulation of mitotic spindle assembly"/>
    <property type="evidence" value="ECO:0007669"/>
    <property type="project" value="Ensembl"/>
</dbReference>
<dbReference type="GO" id="GO:1904776">
    <property type="term" value="P:regulation of protein localization to cell cortex"/>
    <property type="evidence" value="ECO:0007669"/>
    <property type="project" value="Ensembl"/>
</dbReference>
<dbReference type="GO" id="GO:0070194">
    <property type="term" value="P:synaptonemal complex disassembly"/>
    <property type="evidence" value="ECO:0000315"/>
    <property type="project" value="MGI"/>
</dbReference>
<dbReference type="CDD" id="cd13118">
    <property type="entry name" value="POLO_box_1"/>
    <property type="match status" value="1"/>
</dbReference>
<dbReference type="CDD" id="cd13117">
    <property type="entry name" value="POLO_box_2"/>
    <property type="match status" value="1"/>
</dbReference>
<dbReference type="CDD" id="cd14187">
    <property type="entry name" value="STKc_PLK1"/>
    <property type="match status" value="1"/>
</dbReference>
<dbReference type="FunFam" id="1.10.510.10:FF:000727">
    <property type="entry name" value="Serine/threonine-protein kinase PLK"/>
    <property type="match status" value="1"/>
</dbReference>
<dbReference type="FunFam" id="3.30.1120.30:FF:000003">
    <property type="entry name" value="Serine/threonine-protein kinase PLK"/>
    <property type="match status" value="1"/>
</dbReference>
<dbReference type="FunFam" id="3.30.200.20:FF:000284">
    <property type="entry name" value="Serine/threonine-protein kinase PLK"/>
    <property type="match status" value="1"/>
</dbReference>
<dbReference type="Gene3D" id="3.30.200.20">
    <property type="entry name" value="Phosphorylase Kinase, domain 1"/>
    <property type="match status" value="1"/>
</dbReference>
<dbReference type="Gene3D" id="3.30.1120.30">
    <property type="entry name" value="POLO box domain"/>
    <property type="match status" value="2"/>
</dbReference>
<dbReference type="Gene3D" id="1.10.510.10">
    <property type="entry name" value="Transferase(Phosphotransferase) domain 1"/>
    <property type="match status" value="1"/>
</dbReference>
<dbReference type="InterPro" id="IPR011009">
    <property type="entry name" value="Kinase-like_dom_sf"/>
</dbReference>
<dbReference type="InterPro" id="IPR033702">
    <property type="entry name" value="PLK1_cat"/>
</dbReference>
<dbReference type="InterPro" id="IPR033701">
    <property type="entry name" value="POLO_box_1"/>
</dbReference>
<dbReference type="InterPro" id="IPR033695">
    <property type="entry name" value="POLO_box_2"/>
</dbReference>
<dbReference type="InterPro" id="IPR000959">
    <property type="entry name" value="POLO_box_dom"/>
</dbReference>
<dbReference type="InterPro" id="IPR036947">
    <property type="entry name" value="POLO_box_dom_sf"/>
</dbReference>
<dbReference type="InterPro" id="IPR000719">
    <property type="entry name" value="Prot_kinase_dom"/>
</dbReference>
<dbReference type="InterPro" id="IPR017441">
    <property type="entry name" value="Protein_kinase_ATP_BS"/>
</dbReference>
<dbReference type="InterPro" id="IPR008271">
    <property type="entry name" value="Ser/Thr_kinase_AS"/>
</dbReference>
<dbReference type="PANTHER" id="PTHR24345">
    <property type="entry name" value="SERINE/THREONINE-PROTEIN KINASE PLK"/>
    <property type="match status" value="1"/>
</dbReference>
<dbReference type="PANTHER" id="PTHR24345:SF93">
    <property type="entry name" value="SERINE_THREONINE-PROTEIN KINASE PLK1"/>
    <property type="match status" value="1"/>
</dbReference>
<dbReference type="Pfam" id="PF00069">
    <property type="entry name" value="Pkinase"/>
    <property type="match status" value="1"/>
</dbReference>
<dbReference type="Pfam" id="PF00659">
    <property type="entry name" value="POLO_box"/>
    <property type="match status" value="2"/>
</dbReference>
<dbReference type="SMART" id="SM00220">
    <property type="entry name" value="S_TKc"/>
    <property type="match status" value="1"/>
</dbReference>
<dbReference type="SUPFAM" id="SSF82615">
    <property type="entry name" value="Polo-box domain"/>
    <property type="match status" value="2"/>
</dbReference>
<dbReference type="SUPFAM" id="SSF56112">
    <property type="entry name" value="Protein kinase-like (PK-like)"/>
    <property type="match status" value="1"/>
</dbReference>
<dbReference type="PROSITE" id="PS50078">
    <property type="entry name" value="POLO_BOX"/>
    <property type="match status" value="2"/>
</dbReference>
<dbReference type="PROSITE" id="PS00107">
    <property type="entry name" value="PROTEIN_KINASE_ATP"/>
    <property type="match status" value="1"/>
</dbReference>
<dbReference type="PROSITE" id="PS50011">
    <property type="entry name" value="PROTEIN_KINASE_DOM"/>
    <property type="match status" value="1"/>
</dbReference>
<dbReference type="PROSITE" id="PS00108">
    <property type="entry name" value="PROTEIN_KINASE_ST"/>
    <property type="match status" value="1"/>
</dbReference>
<comment type="function">
    <text evidence="3 8 10 11">Serine/threonine-protein kinase that performs several important functions throughout M phase of the cell cycle, including the regulation of centrosome maturation and spindle assembly, the removal of cohesins from chromosome arms, the inactivation of anaphase-promoting complex/cyclosome (APC/C) inhibitors, and the regulation of mitotic exit and cytokinesis (PubMed:22405274, PubMed:27979967). Polo-like kinase proteins act by binding and phosphorylating proteins that are already phosphorylated on a specific motif recognized by the POLO box domains (By similarity). Phosphorylates BORA, BUB1B/BUBR1, CCNB1, CDC25C, CEP55, ECT2, ERCC6L, FBXO5/EMI1, FOXM1, KIF20A/MKLP2, CENPU, NEDD1, NINL, NPM1, NUDC, PKMYT1/MYT1, KIZ, MRE11, PPP1R12A/MYPT1, POLQ, PRC1, RACGAP1/CYK4, RAD51, RHNO1, SGO1, STAG2/SA2, TEX14, TOPORS, p73/TP73, TPT1, WEE1 and HNRNPU (PubMed:22405274). Plays a key role in centrosome functions and the assembly of bipolar spindles by phosphorylating KIZ, NEDD1 and NINL (By similarity). NEDD1 phosphorylation promotes subsequent targeting of the gamma-tubulin ring complex (gTuRC) to the centrosome, an important step for spindle formation (By similarity). Phosphorylation of NINL component of the centrosome leads to NINL dissociation from other centrosomal proteins (By similarity). Involved in mitosis exit and cytokinesis by phosphorylating CEP55, ECT2, KIF20A/MKLP2, CENPU, PRC1 and RACGAP1 (By similarity). Recruited at the central spindle by phosphorylating and docking PRC1 and KIF20A/MKLP2; creates its own docking sites on PRC1 and KIF20A/MKLP2 by mediating phosphorylation of sites subsequently recognized by the POLO box domains (By similarity). Phosphorylates RACGAP1, thereby creating a docking site for the Rho GTP exchange factor ECT2 that is essential for the cleavage furrow formation (By similarity). Promotes the central spindle recruitment of ECT2 (By similarity). Plays a central role in G2/M transition of mitotic cell cycle by phosphorylating CCNB1, CDC25C, FOXM1, CENPU, PKMYT1/MYT1, PPP1R12A/MYPT1 and WEE1 (By similarity). Part of a regulatory circuit that promotes the activation of CDK1 by phosphorylating the positive regulator CDC25C and inhibiting the negative regulators WEE1 and PKMYT1/MYT1 (By similarity). Also acts by mediating phosphorylation of cyclin-B1 (CCNB1) on centrosomes in prophase (By similarity). Phosphorylates FOXM1, a key mitotic transcription regulator, leading to enhance FOXM1 transcriptional activity (By similarity). Involved in kinetochore functions and sister chromatid cohesion by phosphorylating BUB1B/BUBR1, FBXO5/EMI1 and STAG2/SA2 (By similarity). PLK1 is high on non-attached kinetochores suggesting a role of PLK1 in kinetochore attachment or in spindle assembly checkpoint (SAC) regulation (By similarity). Required for kinetochore localization of BUB1B (By similarity). Regulates the dissociation of cohesin from chromosomes by phosphorylating cohesin subunits such as STAG2/SA2 (By similarity). Phosphorylates SGO1: required for spindle pole localization of isoform 3 of SGO1 and plays a role in regulating its centriole cohesion function (By similarity). Mediates phosphorylation of FBXO5/EMI1, a negative regulator of the APC/C complex during prophase, leading to FBXO5/EMI1 ubiquitination and degradation by the proteasome (By similarity). Acts as a negative regulator of p53 family members: phosphorylates TOPORS, leading to inhibit the sumoylation of p53/TP53 and simultaneously enhance the ubiquitination and subsequent degradation of p53/TP53 (By similarity). Phosphorylates the transactivation domain of the transcription factor p73/TP73, leading to inhibit p73/TP73-mediated transcriptional activation and pro-apoptotic functions (By similarity). Phosphorylates BORA, and thereby promotes the degradation of BORA (By similarity). Contributes to the regulation of AURKA function (By similarity). Also required for recovery after DNA damage checkpoint and entry into mitosis (By similarity). Phosphorylates MISP, leading to stabilization of cortical and astral microtubule attachments required for proper spindle positioning (By similarity). Together with MEIKIN, acts as a regulator of kinetochore function during meiosis I: required both for mono-orientation of kinetochores on sister chromosomes and protection of centromeric cohesin from separase-mediated cleavage (PubMed:25533956). Phosphorylates CEP68 and is required for its degradation (By similarity). Regulates nuclear envelope breakdown during prophase by phosphorylating DCTN1 resulting in its localization in the nuclear envelope (By similarity). Phosphorylates the heat shock transcription factor HSF1, promoting HSF1 nuclear translocation upon heat shock (By similarity). Phosphorylates HSF1 also in the early mitotic period; this phosphorylation regulates HSF1 localization to the spindle pole, the recruitment of the SCF(BTRC) ubiquitin ligase complex induicing HSF1 degradation, and hence mitotic progression (By similarity). Regulates mitotic progression by phosphorylating RIOK2 (By similarity). Through the phosphorylation of DZIP1 regulates the localization during mitosis of the BBSome, a ciliary protein complex involved in cilium biogenesis (PubMed:27979967). Regulates DNA repair during mitosis by mediating phosphorylation of POLQ and RHNO1, thereby promoting POLQ recruitment to DNA damage sites (By similarity). Phosphorylates ATXN10 which may play a role in the regulation of cytokinesis and may stimulate the proteasome-mediated degradation of ATXN10 (By similarity).</text>
</comment>
<comment type="catalytic activity">
    <reaction evidence="8">
        <text>L-seryl-[protein] + ATP = O-phospho-L-seryl-[protein] + ADP + H(+)</text>
        <dbReference type="Rhea" id="RHEA:17989"/>
        <dbReference type="Rhea" id="RHEA-COMP:9863"/>
        <dbReference type="Rhea" id="RHEA-COMP:11604"/>
        <dbReference type="ChEBI" id="CHEBI:15378"/>
        <dbReference type="ChEBI" id="CHEBI:29999"/>
        <dbReference type="ChEBI" id="CHEBI:30616"/>
        <dbReference type="ChEBI" id="CHEBI:83421"/>
        <dbReference type="ChEBI" id="CHEBI:456216"/>
        <dbReference type="EC" id="2.7.11.21"/>
    </reaction>
</comment>
<comment type="catalytic activity">
    <reaction evidence="8">
        <text>L-threonyl-[protein] + ATP = O-phospho-L-threonyl-[protein] + ADP + H(+)</text>
        <dbReference type="Rhea" id="RHEA:46608"/>
        <dbReference type="Rhea" id="RHEA-COMP:11060"/>
        <dbReference type="Rhea" id="RHEA-COMP:11605"/>
        <dbReference type="ChEBI" id="CHEBI:15378"/>
        <dbReference type="ChEBI" id="CHEBI:30013"/>
        <dbReference type="ChEBI" id="CHEBI:30616"/>
        <dbReference type="ChEBI" id="CHEBI:61977"/>
        <dbReference type="ChEBI" id="CHEBI:456216"/>
        <dbReference type="EC" id="2.7.11.21"/>
    </reaction>
</comment>
<comment type="activity regulation">
    <text evidence="3">Activated by phosphorylation of Thr-210 by AURKA; phosphorylation by AURKA is enhanced by BORA. Once activated, activity is stimulated by binding target proteins. Binding of target proteins has no effect on the non-activated kinase. Several inhibitors targeting PLKs are currently in development and are under investigation in a growing number of clinical trials, such as BI 2536, an ATP-competitive PLK1 inhibitor or BI 6727, a dihydropteridinone that specifically inhibits the catalytic activity of PLK1 (By similarity).</text>
</comment>
<comment type="subunit">
    <text evidence="2 3 9 12">Interacts with CEP170 and EVI5. Interacts and phosphorylates ERCC6L. Interacts with FAM29A. Interacts with SLX4/BTBD12 and TTDN1. Interacts with BUB1B. Interacts (via POLO-box domain) with the phosphorylated form of BUB1, CENPU and CDC25C. Interacts with isoform 3 of SGO1. Interacts with BORA, KIF2A and AURKA. Interacts with TOPORS and CYLD. Interacts with ECT2; the interaction is stimulated upon phosphorylation of ECT2 on 'Thr-444'. Interacts with PRC1. Interacts with KIF20A/MKLP2 (when phosphorylated), leading to the recruitment at the central spindle. Interacts (via POLO box domains) with PPP1R12A/MYPT1 (when previously phosphorylated by CDK1) (By similarity). Part of an astrin (SPAG5)-kinastrin (SKAP) complex containing KNSTRN, SPAG5, PLK1, DYNLL1 and SGO2A (By similarity). Interacts with BIRC6/bruce (By similarity). Interacts with CDK1-phosphorylated DCTN6 during mitotic prometaphase; the interaction facilitates recruitment to kinetochores (By similarity). Interacts with CDK1-phosphorylated FRY; this interaction occurs in mitotic cells, but not in interphase cells. FRY interaction facilitates AURKA-mediated PLK1 phosphorylation. Interacts with CEP68; the interaction phosphorylates CEP68. Interacts (via POLO-box domain) with DCTN1 (By similarity). Interacts with CEP20 in later G1, S, G2 and M phases of the cell cycle; this interaction recruits PLK1 to centrosomes, a step required for S phase progression (By similarity). Interacts with HSF1; this interaction increases upon heat shock but does not modulate neither HSF1 homotrimerization nor DNA-binding activities (By similarity). Interacts with HNRNPU; this interaction induces phosphorylation of HNRNPU in mitosis (By similarity). Interacts (via its N-terminus) with RIOK2 (By similarity). Interacts with KLHL22 (By similarity). Interacts (via POLO box domains) with NEDD9/HEF1 (via C-terminus) (PubMed:29191835). Interacts (via RVxF motif) with FIRRM; regulates PLK1 kinase activity (By similarity). Interacts with SKA3; the interaction promotes the stability of PLK1 (By similarity). Interacts with the MTMR3:MTMR4 heterooligomer; brings CEP55 and PLK1 together during early mitosis, regulating the phosphorylation of CEP55 by PLK1 and its recruitment to the midbody where it can mediate cell abscission (By similarity).</text>
</comment>
<comment type="interaction">
    <interactant intactId="EBI-2552999">
        <id>Q07832</id>
    </interactant>
    <interactant intactId="EBI-20739301">
        <id>Q5F2C3</id>
        <label>Meikin</label>
    </interactant>
    <organismsDiffer>false</organismsDiffer>
    <experiments>4</experiments>
</comment>
<comment type="subcellular location">
    <subcellularLocation>
        <location evidence="3">Nucleus</location>
    </subcellularLocation>
    <subcellularLocation>
        <location evidence="10">Chromosome</location>
        <location evidence="10">Centromere</location>
        <location evidence="10">Kinetochore</location>
    </subcellularLocation>
    <subcellularLocation>
        <location evidence="3">Cytoplasm</location>
        <location evidence="3">Cytoskeleton</location>
        <location evidence="3">Microtubule organizing center</location>
        <location evidence="3">Centrosome</location>
    </subcellularLocation>
    <subcellularLocation>
        <location evidence="3">Cytoplasm</location>
        <location evidence="3">Cytoskeleton</location>
        <location evidence="3">Spindle</location>
    </subcellularLocation>
    <subcellularLocation>
        <location evidence="3">Midbody</location>
    </subcellularLocation>
    <text evidence="3">localization at the centrosome starts at the G1/S transition (By similarity). During early stages of mitosis, the phosphorylated form is detected on centrosomes and kinetochores. Localizes to the outer kinetochore. Presence of SGO1 and interaction with the phosphorylated form of BUB1 is required for the kinetochore localization. Localizes onto the central spindle by phosphorylating and docking at midzone proteins KIF20A/MKLP2 and PRC1 (By similarity). Colocalizes with FRY to separating centrosomes and spindle poles from prophase to metaphase in mitosis, but not in other stages of the cell cycle (By similarity). Localization to the centrosome is required for S phase progression (By similarity). Colocalizes with HSF1 at the spindle poles during prometaphase (By similarity).</text>
</comment>
<comment type="tissue specificity">
    <text>Newborn and adult spleen, fetal and newborn kidney, liver, brain, thymus and adult bone marrow, thymus, ovary and testes.</text>
</comment>
<comment type="developmental stage">
    <text>In the thymus, levels increased during fetal development, were highest in newborn animals and decreased in the adult. In the testes, the PLK levels were higher in the adult than in prepubescent mice while in the ovary, the levels were higher in the prepubescent mice. Accumulates to a maximum during the G2 and M phases, declines to a nearly undetectable level following mitosis and throughout G1 phase, and then begins to accumulate again during S phase.</text>
</comment>
<comment type="domain">
    <text evidence="3">The POLO box domains act as phosphopeptide-binding module that recognizes and binds serine-[phosphothreonine/phosphoserine]-(proline/X) motifs. PLK1 recognizes and binds docking proteins that are already phosphorylated on these motifs, and then phosphorylates them. PLK1 can also create its own docking sites by mediating phosphorylation of serine-[phosphothreonine/phosphoserine]-(proline/X) motifs subsequently recognized by the POLO box domains (By similarity).</text>
</comment>
<comment type="PTM">
    <text evidence="3">Catalytic activity is enhanced by phosphorylation of Thr-210. Phosphorylation at Thr-210 is first detected on centrosomes in the G2 phase of the cell cycle, peaks in prometaphase and gradually disappears from centrosomes during anaphase. Dephosphorylation at Thr-210 at centrosomes is probably mediated by protein phosphatase 1C (PP1C), via interaction with PPP1R12A/MYPT1. Autophosphorylation and phosphorylation of Ser-137 may not be significant for the activation of PLK1 during mitosis, but may enhance catalytic activity during recovery after DNA damage checkpoint. Phosphorylated in vitro by STK10 (By similarity).</text>
</comment>
<comment type="PTM">
    <text evidence="3">Ubiquitinated by the anaphase promoting complex/cyclosome (APC/C) in anaphase and following DNA damage, leading to its degradation by the proteasome. Ubiquitination is mediated via its interaction with FZR1/CDH1. Ubiquitination and subsequent degradation prevents entry into mitosis and is essential to maintain an efficient G2 DNA damage checkpoint. Monoubiquitination at Lys-492 by the BCR(KLHL22) ubiquitin ligase complex does not lead to degradation: it promotes PLK1 dissociation from phosphoreceptor proteins and subsequent removal from kinetochores, allowing silencing of the spindle assembly checkpoint (SAC) and chromosome segregation (By similarity).</text>
</comment>
<comment type="disruption phenotype">
    <text evidence="7">Lethality: homozygous embryos do not develop beyond the eight cell stage. Heterozygous mice are healthy and fertile but frequently develop tumors, most frequently lung-invading and liver-invading lymphomas. Analysis of chromosome spreads of spleen-derived cells from 6-month-old mice show aneuploidy.</text>
</comment>
<comment type="similarity">
    <text evidence="5">Belongs to the protein kinase superfamily. Ser/Thr protein kinase family. CDC5/Polo subfamily.</text>
</comment>
<gene>
    <name type="primary">Plk1</name>
    <name type="synonym">Plk</name>
</gene>
<feature type="chain" id="PRO_0000086557" description="Serine/threonine-protein kinase PLK1">
    <location>
        <begin position="1"/>
        <end position="603"/>
    </location>
</feature>
<feature type="domain" description="Protein kinase" evidence="5">
    <location>
        <begin position="53"/>
        <end position="305"/>
    </location>
</feature>
<feature type="domain" description="POLO box 1" evidence="4">
    <location>
        <begin position="410"/>
        <end position="488"/>
    </location>
</feature>
<feature type="domain" description="POLO box 2" evidence="4">
    <location>
        <begin position="510"/>
        <end position="592"/>
    </location>
</feature>
<feature type="region of interest" description="Activation loop" evidence="1">
    <location>
        <begin position="194"/>
        <end position="221"/>
    </location>
</feature>
<feature type="region of interest" description="Linker" evidence="1">
    <location>
        <begin position="493"/>
        <end position="507"/>
    </location>
</feature>
<feature type="region of interest" description="Important for interaction with phosphorylated proteins" evidence="1">
    <location>
        <begin position="538"/>
        <end position="540"/>
    </location>
</feature>
<feature type="short sequence motif" description="D-box that targets the protein for proteasomal degradation in anaphase" evidence="1">
    <location>
        <begin position="337"/>
        <end position="340"/>
    </location>
</feature>
<feature type="active site" description="Proton acceptor" evidence="5 6">
    <location>
        <position position="176"/>
    </location>
</feature>
<feature type="binding site" evidence="5">
    <location>
        <begin position="59"/>
        <end position="67"/>
    </location>
    <ligand>
        <name>ATP</name>
        <dbReference type="ChEBI" id="CHEBI:30616"/>
    </ligand>
</feature>
<feature type="binding site" evidence="5">
    <location>
        <position position="82"/>
    </location>
    <ligand>
        <name>ATP</name>
        <dbReference type="ChEBI" id="CHEBI:30616"/>
    </ligand>
</feature>
<feature type="binding site" evidence="5">
    <location>
        <position position="131"/>
    </location>
    <ligand>
        <name>ATP</name>
        <dbReference type="ChEBI" id="CHEBI:30616"/>
    </ligand>
</feature>
<feature type="binding site" evidence="5">
    <location>
        <begin position="178"/>
        <end position="181"/>
    </location>
    <ligand>
        <name>ATP</name>
        <dbReference type="ChEBI" id="CHEBI:30616"/>
    </ligand>
</feature>
<feature type="binding site" evidence="5">
    <location>
        <position position="194"/>
    </location>
    <ligand>
        <name>ATP</name>
        <dbReference type="ChEBI" id="CHEBI:30616"/>
    </ligand>
</feature>
<feature type="modified residue" description="Phosphoserine" evidence="3">
    <location>
        <position position="103"/>
    </location>
</feature>
<feature type="modified residue" description="Phosphoserine" evidence="3">
    <location>
        <position position="137"/>
    </location>
</feature>
<feature type="modified residue" description="Phosphothreonine; by AURKA" evidence="3">
    <location>
        <position position="210"/>
    </location>
</feature>
<feature type="modified residue" description="Phosphothreonine" evidence="3">
    <location>
        <position position="214"/>
    </location>
</feature>
<feature type="modified residue" description="Phosphoserine; by autocatalysis" evidence="1">
    <location>
        <position position="269"/>
    </location>
</feature>
<feature type="modified residue" description="Phosphoserine; by autocatalysis" evidence="3">
    <location>
        <position position="335"/>
    </location>
</feature>
<feature type="modified residue" description="Phosphoserine" evidence="3">
    <location>
        <position position="375"/>
    </location>
</feature>
<feature type="modified residue" description="Phosphoserine" evidence="3">
    <location>
        <position position="450"/>
    </location>
</feature>
<feature type="modified residue" description="Phosphothreonine" evidence="3">
    <location>
        <position position="498"/>
    </location>
</feature>
<feature type="cross-link" description="Glycyl lysine isopeptide (Lys-Gly) (interchain with G-Cter in ubiquitin)" evidence="3">
    <location>
        <position position="19"/>
    </location>
</feature>
<feature type="cross-link" description="Glycyl lysine isopeptide (Lys-Gly) (interchain with G-Cter in SUMO2)" evidence="3">
    <location>
        <position position="338"/>
    </location>
</feature>
<feature type="cross-link" description="Glycyl lysine isopeptide (Lys-Gly) (interchain with G-Cter in ubiquitin)" evidence="3">
    <location>
        <position position="492"/>
    </location>
</feature>
<feature type="mutagenesis site" description="Abolishes activity." evidence="13">
    <original>K</original>
    <variation>M</variation>
    <location>
        <position position="82"/>
    </location>
</feature>
<feature type="mutagenesis site" description="Abolishes activity." evidence="13">
    <original>D</original>
    <variation>N</variation>
    <variation>R</variation>
    <location>
        <position position="194"/>
    </location>
</feature>
<feature type="mutagenesis site" description="No change in activity." evidence="13">
    <original>E</original>
    <variation>D</variation>
    <location>
        <position position="206"/>
    </location>
</feature>
<feature type="mutagenesis site" description="Decreases activity three-fold." evidence="13">
    <original>E</original>
    <variation>V</variation>
    <location>
        <position position="206"/>
    </location>
</feature>
<feature type="mutagenesis site" description="Increases activity four-fold." evidence="13">
    <original>T</original>
    <variation>E</variation>
    <location>
        <position position="210"/>
    </location>
</feature>
<feature type="mutagenesis site" description="Decreases activity three-fold." evidence="13">
    <original>T</original>
    <variation>V</variation>
    <location>
        <position position="210"/>
    </location>
</feature>
<feature type="mutagenesis site" description="Abolishes interaction with NEDD9; when associated with M-540." evidence="12">
    <original>H</original>
    <variation>A</variation>
    <location>
        <position position="538"/>
    </location>
</feature>
<feature type="mutagenesis site" description="Abolishes interaction with NEDD9; when associated with A-538." evidence="12">
    <original>K</original>
    <variation>M</variation>
    <location>
        <position position="540"/>
    </location>
</feature>
<feature type="sequence conflict" description="In Ref. 1; AAA39948." evidence="14" ref="1">
    <original>A</original>
    <variation>V</variation>
    <location>
        <position position="4"/>
    </location>
</feature>
<feature type="sequence conflict" description="In Ref. 1; AAA39948." evidence="14" ref="1">
    <original>A</original>
    <variation>T</variation>
    <location>
        <position position="15"/>
    </location>
</feature>
<feature type="sequence conflict" description="In Ref. 1; AAA39948." evidence="14" ref="1">
    <original>P</original>
    <variation>L</variation>
    <location>
        <position position="23"/>
    </location>
</feature>
<feature type="sequence conflict" description="In Ref. 1; AAA39948." evidence="14" ref="1">
    <original>V</original>
    <variation>A</variation>
    <location>
        <position position="27"/>
    </location>
</feature>
<feature type="sequence conflict" description="In Ref. 1; AAA39948." evidence="14" ref="1">
    <original>G</original>
    <variation>S</variation>
    <location>
        <position position="29"/>
    </location>
</feature>
<feature type="sequence conflict" description="In Ref. 1; AAA39948." evidence="14" ref="1">
    <original>P</original>
    <variation>L</variation>
    <location>
        <position position="41"/>
    </location>
</feature>
<feature type="sequence conflict" description="In Ref. 1; AAA39948." evidence="14" ref="1">
    <original>V</original>
    <variation>I</variation>
    <location>
        <position position="54"/>
    </location>
</feature>
<feature type="sequence conflict" description="In Ref. 1; AAA39948." evidence="14" ref="1">
    <original>A</original>
    <variation>R</variation>
    <location>
        <position position="495"/>
    </location>
</feature>
<feature type="helix" evidence="16">
    <location>
        <begin position="369"/>
        <end position="386"/>
    </location>
</feature>
<feature type="strand" evidence="17">
    <location>
        <begin position="391"/>
        <end position="394"/>
    </location>
</feature>
<feature type="helix" evidence="16">
    <location>
        <begin position="397"/>
        <end position="400"/>
    </location>
</feature>
<feature type="helix" evidence="16">
    <location>
        <begin position="403"/>
        <end position="405"/>
    </location>
</feature>
<feature type="strand" evidence="16">
    <location>
        <begin position="411"/>
        <end position="416"/>
    </location>
</feature>
<feature type="turn" evidence="16">
    <location>
        <begin position="418"/>
        <end position="420"/>
    </location>
</feature>
<feature type="strand" evidence="16">
    <location>
        <begin position="421"/>
        <end position="427"/>
    </location>
</feature>
<feature type="strand" evidence="18">
    <location>
        <begin position="428"/>
        <end position="430"/>
    </location>
</feature>
<feature type="strand" evidence="16">
    <location>
        <begin position="432"/>
        <end position="436"/>
    </location>
</feature>
<feature type="strand" evidence="16">
    <location>
        <begin position="441"/>
        <end position="444"/>
    </location>
</feature>
<feature type="strand" evidence="16">
    <location>
        <begin position="448"/>
        <end position="454"/>
    </location>
</feature>
<feature type="strand" evidence="16">
    <location>
        <begin position="460"/>
        <end position="467"/>
    </location>
</feature>
<feature type="helix" evidence="16">
    <location>
        <begin position="470"/>
        <end position="472"/>
    </location>
</feature>
<feature type="helix" evidence="16">
    <location>
        <begin position="473"/>
        <end position="489"/>
    </location>
</feature>
<feature type="turn" evidence="16">
    <location>
        <begin position="493"/>
        <end position="496"/>
    </location>
</feature>
<feature type="strand" evidence="16">
    <location>
        <begin position="511"/>
        <end position="516"/>
    </location>
</feature>
<feature type="strand" evidence="16">
    <location>
        <begin position="518"/>
        <end position="525"/>
    </location>
</feature>
<feature type="strand" evidence="16">
    <location>
        <begin position="530"/>
        <end position="534"/>
    </location>
</feature>
<feature type="turn" evidence="16">
    <location>
        <begin position="535"/>
        <end position="537"/>
    </location>
</feature>
<feature type="strand" evidence="16">
    <location>
        <begin position="540"/>
        <end position="544"/>
    </location>
</feature>
<feature type="turn" evidence="16">
    <location>
        <begin position="545"/>
        <end position="548"/>
    </location>
</feature>
<feature type="strand" evidence="16">
    <location>
        <begin position="549"/>
        <end position="553"/>
    </location>
</feature>
<feature type="strand" evidence="16">
    <location>
        <begin position="559"/>
        <end position="563"/>
    </location>
</feature>
<feature type="helix" evidence="16">
    <location>
        <begin position="564"/>
        <end position="570"/>
    </location>
</feature>
<feature type="helix" evidence="16">
    <location>
        <begin position="574"/>
        <end position="592"/>
    </location>
</feature>
<organism>
    <name type="scientific">Mus musculus</name>
    <name type="common">Mouse</name>
    <dbReference type="NCBI Taxonomy" id="10090"/>
    <lineage>
        <taxon>Eukaryota</taxon>
        <taxon>Metazoa</taxon>
        <taxon>Chordata</taxon>
        <taxon>Craniata</taxon>
        <taxon>Vertebrata</taxon>
        <taxon>Euteleostomi</taxon>
        <taxon>Mammalia</taxon>
        <taxon>Eutheria</taxon>
        <taxon>Euarchontoglires</taxon>
        <taxon>Glires</taxon>
        <taxon>Rodentia</taxon>
        <taxon>Myomorpha</taxon>
        <taxon>Muroidea</taxon>
        <taxon>Muridae</taxon>
        <taxon>Murinae</taxon>
        <taxon>Mus</taxon>
        <taxon>Mus</taxon>
    </lineage>
</organism>
<protein>
    <recommendedName>
        <fullName>Serine/threonine-protein kinase PLK1</fullName>
        <ecNumber evidence="8">2.7.11.21</ecNumber>
    </recommendedName>
    <alternativeName>
        <fullName>Polo-like kinase 1</fullName>
        <shortName>PLK-1</shortName>
    </alternativeName>
    <alternativeName>
        <fullName>Serine/threonine-protein kinase 13</fullName>
        <shortName>STPK13</shortName>
    </alternativeName>
</protein>
<accession>Q07832</accession>
<sequence>MNAAAKAGKLARAPADLGKGGVPGDAVPGAPVAAPLAKEIPEVLVDPRSRRQYVRGRFLGKGGFAKCFEISDADTKEVFAGKIVPKSLLLKPHQKEKMSMEISIHRSLAHQHVVGFHDFFEDSDFVFVVLELCRRRSLLELHKRRKALTEPEARYYLRQIVLGCQYLHRNQVIHRDLKLGNLFLNEDLEVKIGDFGLATKVEYEGERKKTLCGTPNYIAPEVLSKKGHSFEVDVWSIGCIMYTLLVGKPPFETSCLKETYLRIKKNEYSIPKHINPVAASLIQKMLQTDPTARPTIHELLNDEFFTSGYIPARLPITCLTIPPRFSIAPSSLDPSSRKPLKVLNKGVENPLPDRPREKEEPVVRETNEAIECHLSDLLQQLTSVNASKPSERGLVRQEEAEDPACIPIFWVSKWVDYSDKYGLGYQLCDNSVGVLFNDSTRLILYNDGDSLQYIERDGTESYLTVSSHPNSLMKKITLLNYFRNYMSEHLLKAGANITPREGDELARLPYLRTWFRTRSAIILHLSNGTVQINFFQDHTKLILCPLMAAVTYINEKRDFQTYRLSLLEEYGCCKELASRLRYARTMVDKLLSSRSASNRLKAS</sequence>